<protein>
    <recommendedName>
        <fullName>Zinc finger protein mex-5</fullName>
    </recommendedName>
</protein>
<sequence>MKAASNSVSSAGGSVSPTTTQPPLPPGQSSHPQIYDQQMQYYFAAAMPNQPMATYAAQNGSSQQYAPAAPYYQDANGQYVQVPANGSMAPQQHMMVSGQPYLYMAQPQQGAQQVMQSGQPQLIYYQQSMAPQAAPMYFHPMQAAPMLPEQMGVMPHTQPAIPPQQQPRQVGVEISSTRTAPLTSSTPLPTSLEYETVQRDNRNRNIQFRYHRVMEHDELPIDEISKITLDNHNDDTMSAEKENHFHEHRGEKFGRRGFPIPETDSQQPPNYKTRLCMMHASGIKPCDMGARCKFAHGLKELRATDAPARYPNNKYKTKLCKNFARGGTGFCPYGLRCEFVHPTDKEFQNIPPYQRMSHDDQDYDQDVIPEDYVVARHQPRFMRTGGRATTPTKVMLKHRNVAGSMMCLSNAGRDLQAGGDYNQPESNEDDLPPHLRRNRRENPPMNKRRTSLSTKWTSEENLGLRGHY</sequence>
<reference key="1">
    <citation type="journal article" date="1998" name="Science">
        <title>Genome sequence of the nematode C. elegans: a platform for investigating biology.</title>
        <authorList>
            <consortium name="The C. elegans sequencing consortium"/>
        </authorList>
    </citation>
    <scope>NUCLEOTIDE SEQUENCE [LARGE SCALE GENOMIC DNA]</scope>
    <source>
        <strain>Bristol N2</strain>
    </source>
</reference>
<reference key="2">
    <citation type="journal article" date="2000" name="Mol. Cell">
        <title>MEX-5 and MEX-6 function to establish soma/germline asymmetry in early C. elegans embryos.</title>
        <authorList>
            <person name="Schubert C.M."/>
            <person name="Lin R."/>
            <person name="de Vries C.J."/>
            <person name="Plasterk R.H."/>
            <person name="Priess J.R."/>
        </authorList>
    </citation>
    <scope>FUNCTION</scope>
</reference>
<reference key="3">
    <citation type="journal article" date="2008" name="Development">
        <title>Polo kinases regulate C. elegans embryonic polarity via binding to DYRK2-primed MEX-5 and MEX-6.</title>
        <authorList>
            <person name="Nishi Y."/>
            <person name="Rogers E."/>
            <person name="Robertson S.M."/>
            <person name="Lin R."/>
        </authorList>
    </citation>
    <scope>FUNCTION</scope>
    <scope>INTERACTION WITH PLK-1 AND PLK-2</scope>
    <scope>SUBCELLULAR LOCATION</scope>
    <scope>TISSUE SPECIFICITY</scope>
    <scope>PHOSPHORYLATION AT THR-186</scope>
    <scope>DISRUPTION PHENOTYPE</scope>
    <scope>MUTAGENESIS OF THR-186</scope>
</reference>
<reference key="4">
    <citation type="journal article" date="2008" name="Development">
        <title>MEX-5 asymmetry in one-cell C. elegans embryos requires PAR-4- and PAR-1-dependent phosphorylation.</title>
        <authorList>
            <person name="Tenlen J.R."/>
            <person name="Molk J.N."/>
            <person name="London N."/>
            <person name="Page B.D."/>
            <person name="Priess J.R."/>
        </authorList>
    </citation>
    <scope>FUNCTION</scope>
    <scope>SUBCELLULAR LOCATION</scope>
    <scope>TISSUE SPECIFICITY</scope>
    <scope>PHOSPHORYLATION AT SER-458</scope>
    <scope>MUTAGENESIS OF SER-458</scope>
</reference>
<reference key="5">
    <citation type="journal article" date="2015" name="Dev. Cell">
        <title>POS-1 Promotes Endo-mesoderm Development by Inhibiting the Cytoplasmic Polyadenylation of neg-1 mRNA.</title>
        <authorList>
            <person name="Elewa A."/>
            <person name="Shirayama M."/>
            <person name="Kaymak E."/>
            <person name="Harrison P.F."/>
            <person name="Powell D.R."/>
            <person name="Du Z."/>
            <person name="Chute C.D."/>
            <person name="Woolf H."/>
            <person name="Yi D."/>
            <person name="Ishidate T."/>
            <person name="Srinivasan J."/>
            <person name="Bao Z."/>
            <person name="Beilharz T.H."/>
            <person name="Ryder S.P."/>
            <person name="Mello C.C."/>
        </authorList>
    </citation>
    <scope>FUNCTION</scope>
    <scope>DISRUPTION PHENOTYPE</scope>
</reference>
<reference key="6">
    <citation type="journal article" date="2016" name="Cell">
        <title>Polar positioning of phase-separated liquid compartments in cells regulated by an mRNA competition mechanism.</title>
        <authorList>
            <person name="Saha S."/>
            <person name="Weber C.A."/>
            <person name="Nousch M."/>
            <person name="Adame-Arana O."/>
            <person name="Hoege C."/>
            <person name="Hein M.Y."/>
            <person name="Osborne-Nishimura E."/>
            <person name="Mahamid J."/>
            <person name="Jahnel M."/>
            <person name="Jawerth L."/>
            <person name="Pozniakovski A."/>
            <person name="Eckmann C.R."/>
            <person name="Juelicher F."/>
            <person name="Hyman A.A."/>
        </authorList>
    </citation>
    <scope>FUNCTION</scope>
</reference>
<reference key="7">
    <citation type="journal article" date="2018" name="G3 (Bethesda)">
        <title>PIE-1 Translation in the Germline Lineage Contributes to PIE-1 Asymmetry in the Early Caenorhabditis elegans Embryo.</title>
        <authorList>
            <person name="Gauvin T.J."/>
            <person name="Han B."/>
            <person name="Sun M.J."/>
            <person name="Griffin E.E."/>
        </authorList>
    </citation>
    <scope>FUNCTION</scope>
    <scope>DISRUPTION PHENOTYPE</scope>
</reference>
<evidence type="ECO:0000255" key="1">
    <source>
        <dbReference type="PROSITE-ProRule" id="PRU00723"/>
    </source>
</evidence>
<evidence type="ECO:0000256" key="2">
    <source>
        <dbReference type="SAM" id="MobiDB-lite"/>
    </source>
</evidence>
<evidence type="ECO:0000269" key="3">
    <source>
    </source>
</evidence>
<evidence type="ECO:0000269" key="4">
    <source>
    </source>
</evidence>
<evidence type="ECO:0000269" key="5">
    <source>
    </source>
</evidence>
<evidence type="ECO:0000269" key="6">
    <source>
    </source>
</evidence>
<evidence type="ECO:0000269" key="7">
    <source>
    </source>
</evidence>
<evidence type="ECO:0000269" key="8">
    <source>
    </source>
</evidence>
<evidence type="ECO:0000312" key="9">
    <source>
        <dbReference type="WormBase" id="W02A2.7"/>
    </source>
</evidence>
<evidence type="ECO:0007829" key="10">
    <source>
        <dbReference type="PDB" id="6PMG"/>
    </source>
</evidence>
<keyword id="KW-0002">3D-structure</keyword>
<keyword id="KW-0963">Cytoplasm</keyword>
<keyword id="KW-0217">Developmental protein</keyword>
<keyword id="KW-0238">DNA-binding</keyword>
<keyword id="KW-0479">Metal-binding</keyword>
<keyword id="KW-0597">Phosphoprotein</keyword>
<keyword id="KW-1185">Reference proteome</keyword>
<keyword id="KW-0677">Repeat</keyword>
<keyword id="KW-0694">RNA-binding</keyword>
<keyword id="KW-0862">Zinc</keyword>
<keyword id="KW-0863">Zinc-finger</keyword>
<proteinExistence type="evidence at protein level"/>
<comment type="function">
    <text evidence="3 4 5 6 7 8">Functions with mex-6 to affect embryonic viability, establish soma germline asymmetry in embryos and establish plk-1, pie-1, mex-1, and pos-1 asymmetry in embryos (PubMed:10882103, PubMed:18199581, PubMed:18842813, PubMed:30279189). Also affects formation of intestinal cells (PubMed:10882103). Binds to mRNA in vitro, and inhibits pgl-3-mediated P-granule formation, probably by competing with pgl-3 for binding to mRNA (PubMed:27594427). Required for neg-1 expression in anterior blastomeres during embryogenesis (PubMed:26096734).</text>
</comment>
<comment type="subunit">
    <text evidence="4">Interacts (when phosphorylated on Thr-186) with plk-1 (via POLO box domain) and plk-2 (via POLO box domain).</text>
</comment>
<comment type="subcellular location">
    <subcellularLocation>
        <location evidence="4 5">Cytoplasm</location>
    </subcellularLocation>
</comment>
<comment type="tissue specificity">
    <text evidence="4 5">Asymmetrically localized to the anterior of the zygote before mitotic division, then differentially distributed to the somatic blastomere precursor cells.</text>
</comment>
<comment type="PTM">
    <text evidence="4 5">Phosphorylation on Ser-458 by par-1 promotes localization of the protein to the anterior cytoplasm of the zygote (PubMed:18842813). Phosphorylation by mbk-1 appears to be required for subsequent phosphorylation by plk-1 (PubMed:18199581).</text>
</comment>
<comment type="disruption phenotype">
    <text evidence="4 6 8">RNAi-mediated knockdown reduces the expression of pie-1 in P2 blastomeres (PubMed:30279189). Abolishes neg-1 expression in anterior blastomeres (PubMed:26096734). RNAi-mediated knockdown in mex-6 pk440 mutant background causes a loss in plk-1 asymmetric distribution during the first embryonic cell divisions.</text>
</comment>
<gene>
    <name evidence="9" type="primary">mex-5</name>
    <name evidence="9" type="ORF">W02A2.7</name>
</gene>
<dbReference type="EMBL" id="BX284604">
    <property type="protein sequence ID" value="CAB05310.1"/>
    <property type="molecule type" value="Genomic_DNA"/>
</dbReference>
<dbReference type="PIR" id="T26081">
    <property type="entry name" value="T26081"/>
</dbReference>
<dbReference type="RefSeq" id="NP_502566.1">
    <property type="nucleotide sequence ID" value="NM_070165.7"/>
</dbReference>
<dbReference type="PDB" id="6PMG">
    <property type="method" value="NMR"/>
    <property type="chains" value="X=312-346"/>
</dbReference>
<dbReference type="PDBsum" id="6PMG"/>
<dbReference type="BMRB" id="Q9XUB2"/>
<dbReference type="SMR" id="Q9XUB2"/>
<dbReference type="BioGRID" id="43384">
    <property type="interactions" value="24"/>
</dbReference>
<dbReference type="FunCoup" id="Q9XUB2">
    <property type="interactions" value="376"/>
</dbReference>
<dbReference type="IntAct" id="Q9XUB2">
    <property type="interactions" value="3"/>
</dbReference>
<dbReference type="STRING" id="6239.W02A2.7.1"/>
<dbReference type="BindingDB" id="Q9XUB2"/>
<dbReference type="ChEMBL" id="CHEMBL1293319"/>
<dbReference type="DrugCentral" id="Q9XUB2"/>
<dbReference type="iPTMnet" id="Q9XUB2"/>
<dbReference type="PaxDb" id="6239-W02A2.7"/>
<dbReference type="PeptideAtlas" id="Q9XUB2"/>
<dbReference type="EnsemblMetazoa" id="W02A2.7.1">
    <property type="protein sequence ID" value="W02A2.7.1"/>
    <property type="gene ID" value="WBGene00003230"/>
</dbReference>
<dbReference type="GeneID" id="178296"/>
<dbReference type="KEGG" id="cel:CELE_W02A2.7"/>
<dbReference type="UCSC" id="W02A2.7">
    <property type="organism name" value="c. elegans"/>
</dbReference>
<dbReference type="AGR" id="WB:WBGene00003230"/>
<dbReference type="CTD" id="178296"/>
<dbReference type="WormBase" id="W02A2.7">
    <property type="protein sequence ID" value="CE21237"/>
    <property type="gene ID" value="WBGene00003230"/>
    <property type="gene designation" value="mex-5"/>
</dbReference>
<dbReference type="eggNOG" id="KOG1677">
    <property type="taxonomic scope" value="Eukaryota"/>
</dbReference>
<dbReference type="GeneTree" id="ENSGT00970000196404"/>
<dbReference type="HOGENOM" id="CLU_584274_0_0_1"/>
<dbReference type="InParanoid" id="Q9XUB2"/>
<dbReference type="OMA" id="YHRVMEH"/>
<dbReference type="OrthoDB" id="410307at2759"/>
<dbReference type="Reactome" id="R-CEL-450385">
    <property type="pathway name" value="Butyrate Response Factor 1 (BRF1) binds and destabilizes mRNA"/>
</dbReference>
<dbReference type="Reactome" id="R-CEL-450513">
    <property type="pathway name" value="Tristetraprolin (TTP, ZFP36) binds and destabilizes mRNA"/>
</dbReference>
<dbReference type="CD-CODE" id="0F0CDB11">
    <property type="entry name" value="Synthetic Condensate 000073"/>
</dbReference>
<dbReference type="CD-CODE" id="73A75392">
    <property type="entry name" value="P-granule"/>
</dbReference>
<dbReference type="CD-CODE" id="97E999E0">
    <property type="entry name" value="Synthetic Condensate 000219"/>
</dbReference>
<dbReference type="PRO" id="PR:Q9XUB2"/>
<dbReference type="Proteomes" id="UP000001940">
    <property type="component" value="Chromosome IV"/>
</dbReference>
<dbReference type="Bgee" id="WBGene00003230">
    <property type="expression patterns" value="Expressed in germ line (C elegans) and 4 other cell types or tissues"/>
</dbReference>
<dbReference type="GO" id="GO:0005813">
    <property type="term" value="C:centrosome"/>
    <property type="evidence" value="ECO:0000314"/>
    <property type="project" value="WormBase"/>
</dbReference>
<dbReference type="GO" id="GO:0005737">
    <property type="term" value="C:cytoplasm"/>
    <property type="evidence" value="ECO:0000314"/>
    <property type="project" value="WormBase"/>
</dbReference>
<dbReference type="GO" id="GO:0005829">
    <property type="term" value="C:cytosol"/>
    <property type="evidence" value="ECO:0000318"/>
    <property type="project" value="GO_Central"/>
</dbReference>
<dbReference type="GO" id="GO:0043186">
    <property type="term" value="C:P granule"/>
    <property type="evidence" value="ECO:0000314"/>
    <property type="project" value="WormBase"/>
</dbReference>
<dbReference type="GO" id="GO:0003677">
    <property type="term" value="F:DNA binding"/>
    <property type="evidence" value="ECO:0007669"/>
    <property type="project" value="UniProtKB-KW"/>
</dbReference>
<dbReference type="GO" id="GO:0003730">
    <property type="term" value="F:mRNA 3'-UTR binding"/>
    <property type="evidence" value="ECO:0000314"/>
    <property type="project" value="WormBase"/>
</dbReference>
<dbReference type="GO" id="GO:0008187">
    <property type="term" value="F:poly-pyrimidine tract binding"/>
    <property type="evidence" value="ECO:0000314"/>
    <property type="project" value="WormBase"/>
</dbReference>
<dbReference type="GO" id="GO:0019904">
    <property type="term" value="F:protein domain specific binding"/>
    <property type="evidence" value="ECO:0000353"/>
    <property type="project" value="WormBase"/>
</dbReference>
<dbReference type="GO" id="GO:0019901">
    <property type="term" value="F:protein kinase binding"/>
    <property type="evidence" value="ECO:0000353"/>
    <property type="project" value="WormBase"/>
</dbReference>
<dbReference type="GO" id="GO:0008270">
    <property type="term" value="F:zinc ion binding"/>
    <property type="evidence" value="ECO:0007669"/>
    <property type="project" value="UniProtKB-KW"/>
</dbReference>
<dbReference type="GO" id="GO:0032880">
    <property type="term" value="P:regulation of protein localization"/>
    <property type="evidence" value="ECO:0000315"/>
    <property type="project" value="WormBase"/>
</dbReference>
<dbReference type="FunFam" id="4.10.1000.10:FF:000018">
    <property type="entry name" value="Zinc finger protein"/>
    <property type="match status" value="1"/>
</dbReference>
<dbReference type="Gene3D" id="4.10.1000.10">
    <property type="entry name" value="Zinc finger, CCCH-type"/>
    <property type="match status" value="2"/>
</dbReference>
<dbReference type="InterPro" id="IPR045877">
    <property type="entry name" value="ZFP36-like"/>
</dbReference>
<dbReference type="InterPro" id="IPR000571">
    <property type="entry name" value="Znf_CCCH"/>
</dbReference>
<dbReference type="InterPro" id="IPR036855">
    <property type="entry name" value="Znf_CCCH_sf"/>
</dbReference>
<dbReference type="PANTHER" id="PTHR12547">
    <property type="entry name" value="CCCH ZINC FINGER/TIS11-RELATED"/>
    <property type="match status" value="1"/>
</dbReference>
<dbReference type="PANTHER" id="PTHR12547:SF18">
    <property type="entry name" value="PROTEIN TIS11"/>
    <property type="match status" value="1"/>
</dbReference>
<dbReference type="Pfam" id="PF00642">
    <property type="entry name" value="zf-CCCH"/>
    <property type="match status" value="1"/>
</dbReference>
<dbReference type="SMART" id="SM00356">
    <property type="entry name" value="ZnF_C3H1"/>
    <property type="match status" value="2"/>
</dbReference>
<dbReference type="SUPFAM" id="SSF90229">
    <property type="entry name" value="CCCH zinc finger"/>
    <property type="match status" value="2"/>
</dbReference>
<dbReference type="PROSITE" id="PS50103">
    <property type="entry name" value="ZF_C3H1"/>
    <property type="match status" value="2"/>
</dbReference>
<feature type="chain" id="PRO_0000089183" description="Zinc finger protein mex-5">
    <location>
        <begin position="1"/>
        <end position="468"/>
    </location>
</feature>
<feature type="zinc finger region" description="C3H1-type 1" evidence="1">
    <location>
        <begin position="270"/>
        <end position="299"/>
    </location>
</feature>
<feature type="zinc finger region" description="C3H1-type 2" evidence="1">
    <location>
        <begin position="314"/>
        <end position="344"/>
    </location>
</feature>
<feature type="region of interest" description="Disordered" evidence="2">
    <location>
        <begin position="1"/>
        <end position="32"/>
    </location>
</feature>
<feature type="region of interest" description="Disordered" evidence="2">
    <location>
        <begin position="243"/>
        <end position="269"/>
    </location>
</feature>
<feature type="region of interest" description="Disordered" evidence="2">
    <location>
        <begin position="414"/>
        <end position="468"/>
    </location>
</feature>
<feature type="compositionally biased region" description="Low complexity" evidence="2">
    <location>
        <begin position="1"/>
        <end position="19"/>
    </location>
</feature>
<feature type="compositionally biased region" description="Basic and acidic residues" evidence="2">
    <location>
        <begin position="243"/>
        <end position="254"/>
    </location>
</feature>
<feature type="compositionally biased region" description="Polar residues" evidence="2">
    <location>
        <begin position="451"/>
        <end position="460"/>
    </location>
</feature>
<feature type="modified residue" description="Phosphothreonine; by mbk-2" evidence="4">
    <location>
        <position position="186"/>
    </location>
</feature>
<feature type="modified residue" description="Phosphoserine" evidence="5">
    <location>
        <position position="458"/>
    </location>
</feature>
<feature type="mutagenesis site" description="Abolishes phosphorylation. Reduced embryo viability and, pie-1 and mex-5 degradation in embryonic somatic cells. Severe reduction in binding to plk-1 and plk-2. Prevent subsequent phosphorylation by plk-1." evidence="4">
    <original>T</original>
    <variation>A</variation>
    <location>
        <position position="186"/>
    </location>
</feature>
<feature type="mutagenesis site" description="Phosphomimetic mutant which severely abolishes interaction with plk-1 and plk-2." evidence="4">
    <original>T</original>
    <variation>D</variation>
    <variation>E</variation>
    <location>
        <position position="186"/>
    </location>
</feature>
<feature type="mutagenesis site" description="Loss of phosphorylation and zygotic asymmetry." evidence="5">
    <original>S</original>
    <variation>A</variation>
    <location>
        <position position="458"/>
    </location>
</feature>
<feature type="strand" evidence="10">
    <location>
        <begin position="321"/>
        <end position="324"/>
    </location>
</feature>
<feature type="helix" evidence="10">
    <location>
        <begin position="334"/>
        <end position="336"/>
    </location>
</feature>
<name>MEX5_CAEEL</name>
<organism>
    <name type="scientific">Caenorhabditis elegans</name>
    <dbReference type="NCBI Taxonomy" id="6239"/>
    <lineage>
        <taxon>Eukaryota</taxon>
        <taxon>Metazoa</taxon>
        <taxon>Ecdysozoa</taxon>
        <taxon>Nematoda</taxon>
        <taxon>Chromadorea</taxon>
        <taxon>Rhabditida</taxon>
        <taxon>Rhabditina</taxon>
        <taxon>Rhabditomorpha</taxon>
        <taxon>Rhabditoidea</taxon>
        <taxon>Rhabditidae</taxon>
        <taxon>Peloderinae</taxon>
        <taxon>Caenorhabditis</taxon>
    </lineage>
</organism>
<accession>Q9XUB2</accession>